<keyword id="KW-0963">Cytoplasm</keyword>
<keyword id="KW-1185">Reference proteome</keyword>
<comment type="subcellular location">
    <subcellularLocation>
        <location evidence="1">Cytoplasm</location>
        <location evidence="1">Nucleoid</location>
    </subcellularLocation>
</comment>
<comment type="similarity">
    <text evidence="1">Belongs to the YejK family.</text>
</comment>
<accession>B8F4U8</accession>
<feature type="chain" id="PRO_1000191565" description="Nucleoid-associated protein HAPS_0704">
    <location>
        <begin position="1"/>
        <end position="333"/>
    </location>
</feature>
<reference key="1">
    <citation type="journal article" date="2009" name="J. Bacteriol.">
        <title>Complete genome sequence of Haemophilus parasuis SH0165.</title>
        <authorList>
            <person name="Yue M."/>
            <person name="Yang F."/>
            <person name="Yang J."/>
            <person name="Bei W."/>
            <person name="Cai X."/>
            <person name="Chen L."/>
            <person name="Dong J."/>
            <person name="Zhou R."/>
            <person name="Jin M."/>
            <person name="Jin Q."/>
            <person name="Chen H."/>
        </authorList>
    </citation>
    <scope>NUCLEOTIDE SEQUENCE [LARGE SCALE GENOMIC DNA]</scope>
    <source>
        <strain>SH0165</strain>
    </source>
</reference>
<gene>
    <name type="ordered locus">HAPS_0704</name>
</gene>
<proteinExistence type="inferred from homology"/>
<sequence length="333" mass="37655">MSINVTEIVLHQLQQTAGETAELHTVLREDLLAISPEVEQMMLQLHQAYQNKAKAYGIFQSESIFAQQLNRLLEGESEFLPFSHSCAKMLATELVKYPFASGGTFILCRYTFLATEYLFIALIDSRASMLVDDKLEVKRTEYLDITQYDIACRINLTELKHNAQSNRYLTFIKGRVGRKVADFFMDFLGAEEGLNPQVQNQTLLQAVSDYCEQGELDSNQTQAVKKQVFEYCKGQINSGEEIAISELSASMPTLKEIDFADFAEQQEYGLEESIPPVRNALKTLTKYSGSGKGVTISFDAELLSQRIIWDELNDTLTIKGLPANLRDQLERNK</sequence>
<protein>
    <recommendedName>
        <fullName evidence="1">Nucleoid-associated protein HAPS_0704</fullName>
    </recommendedName>
</protein>
<name>NDPA_GLAP5</name>
<evidence type="ECO:0000255" key="1">
    <source>
        <dbReference type="HAMAP-Rule" id="MF_00730"/>
    </source>
</evidence>
<organism>
    <name type="scientific">Glaesserella parasuis serovar 5 (strain SH0165)</name>
    <name type="common">Haemophilus parasuis</name>
    <dbReference type="NCBI Taxonomy" id="557723"/>
    <lineage>
        <taxon>Bacteria</taxon>
        <taxon>Pseudomonadati</taxon>
        <taxon>Pseudomonadota</taxon>
        <taxon>Gammaproteobacteria</taxon>
        <taxon>Pasteurellales</taxon>
        <taxon>Pasteurellaceae</taxon>
        <taxon>Glaesserella</taxon>
    </lineage>
</organism>
<dbReference type="EMBL" id="CP001321">
    <property type="protein sequence ID" value="ACL32350.1"/>
    <property type="molecule type" value="Genomic_DNA"/>
</dbReference>
<dbReference type="SMR" id="B8F4U8"/>
<dbReference type="STRING" id="557723.HAPS_0704"/>
<dbReference type="KEGG" id="hap:HAPS_0704"/>
<dbReference type="HOGENOM" id="CLU_063050_0_1_6"/>
<dbReference type="Proteomes" id="UP000006743">
    <property type="component" value="Chromosome"/>
</dbReference>
<dbReference type="GO" id="GO:0043590">
    <property type="term" value="C:bacterial nucleoid"/>
    <property type="evidence" value="ECO:0007669"/>
    <property type="project" value="TreeGrafter"/>
</dbReference>
<dbReference type="GO" id="GO:0005737">
    <property type="term" value="C:cytoplasm"/>
    <property type="evidence" value="ECO:0007669"/>
    <property type="project" value="UniProtKB-UniRule"/>
</dbReference>
<dbReference type="GO" id="GO:0003690">
    <property type="term" value="F:double-stranded DNA binding"/>
    <property type="evidence" value="ECO:0007669"/>
    <property type="project" value="TreeGrafter"/>
</dbReference>
<dbReference type="GO" id="GO:0003727">
    <property type="term" value="F:single-stranded RNA binding"/>
    <property type="evidence" value="ECO:0007669"/>
    <property type="project" value="TreeGrafter"/>
</dbReference>
<dbReference type="HAMAP" id="MF_00730">
    <property type="entry name" value="NdpA"/>
    <property type="match status" value="1"/>
</dbReference>
<dbReference type="InterPro" id="IPR007358">
    <property type="entry name" value="Nucleoid_associated_NdpA"/>
</dbReference>
<dbReference type="NCBIfam" id="NF001557">
    <property type="entry name" value="PRK00378.1"/>
    <property type="match status" value="1"/>
</dbReference>
<dbReference type="PANTHER" id="PTHR38772">
    <property type="match status" value="1"/>
</dbReference>
<dbReference type="PANTHER" id="PTHR38772:SF1">
    <property type="entry name" value="NUCLEOID-ASSOCIATED PROTEIN YEJK"/>
    <property type="match status" value="1"/>
</dbReference>
<dbReference type="Pfam" id="PF04245">
    <property type="entry name" value="NA37"/>
    <property type="match status" value="1"/>
</dbReference>